<organism>
    <name type="scientific">Homo sapiens</name>
    <name type="common">Human</name>
    <dbReference type="NCBI Taxonomy" id="9606"/>
    <lineage>
        <taxon>Eukaryota</taxon>
        <taxon>Metazoa</taxon>
        <taxon>Chordata</taxon>
        <taxon>Craniata</taxon>
        <taxon>Vertebrata</taxon>
        <taxon>Euteleostomi</taxon>
        <taxon>Mammalia</taxon>
        <taxon>Eutheria</taxon>
        <taxon>Euarchontoglires</taxon>
        <taxon>Primates</taxon>
        <taxon>Haplorrhini</taxon>
        <taxon>Catarrhini</taxon>
        <taxon>Hominidae</taxon>
        <taxon>Homo</taxon>
    </lineage>
</organism>
<dbReference type="EC" id="3.4.-.-" evidence="2"/>
<dbReference type="EMBL" id="AK027887">
    <property type="protein sequence ID" value="BAB55432.1"/>
    <property type="molecule type" value="mRNA"/>
</dbReference>
<dbReference type="EMBL" id="AC007292">
    <property type="protein sequence ID" value="AAD24592.1"/>
    <property type="molecule type" value="Genomic_DNA"/>
</dbReference>
<dbReference type="EMBL" id="AC007292">
    <property type="protein sequence ID" value="AAD24593.1"/>
    <property type="molecule type" value="Genomic_DNA"/>
</dbReference>
<dbReference type="EMBL" id="AC104521">
    <property type="status" value="NOT_ANNOTATED_CDS"/>
    <property type="molecule type" value="Genomic_DNA"/>
</dbReference>
<dbReference type="EMBL" id="BC032652">
    <property type="protein sequence ID" value="AAH32652.1"/>
    <property type="molecule type" value="mRNA"/>
</dbReference>
<dbReference type="CCDS" id="CCDS42470.1">
    <molecule id="Q8N594-1"/>
</dbReference>
<dbReference type="CCDS" id="CCDS54200.1">
    <molecule id="Q8N594-2"/>
</dbReference>
<dbReference type="RefSeq" id="NP_001153318.1">
    <molecule id="Q8N594-2"/>
    <property type="nucleotide sequence ID" value="NM_001159846.3"/>
</dbReference>
<dbReference type="RefSeq" id="NP_116257.2">
    <molecule id="Q8N594-1"/>
    <property type="nucleotide sequence ID" value="NM_032868.5"/>
</dbReference>
<dbReference type="SMR" id="Q8N594"/>
<dbReference type="BioGRID" id="124386">
    <property type="interactions" value="13"/>
</dbReference>
<dbReference type="FunCoup" id="Q8N594">
    <property type="interactions" value="271"/>
</dbReference>
<dbReference type="IntAct" id="Q8N594">
    <property type="interactions" value="23"/>
</dbReference>
<dbReference type="MINT" id="Q8N594"/>
<dbReference type="STRING" id="9606.ENSP00000471735"/>
<dbReference type="iPTMnet" id="Q8N594"/>
<dbReference type="PhosphoSitePlus" id="Q8N594"/>
<dbReference type="BioMuta" id="MPND"/>
<dbReference type="DMDM" id="74728961"/>
<dbReference type="jPOST" id="Q8N594"/>
<dbReference type="MassIVE" id="Q8N594"/>
<dbReference type="PaxDb" id="9606-ENSP00000471735"/>
<dbReference type="PeptideAtlas" id="Q8N594"/>
<dbReference type="ProteomicsDB" id="72023">
    <molecule id="Q8N594-1"/>
</dbReference>
<dbReference type="ProteomicsDB" id="72024">
    <molecule id="Q8N594-2"/>
</dbReference>
<dbReference type="Pumba" id="Q8N594"/>
<dbReference type="Antibodypedia" id="23593">
    <property type="antibodies" value="142 antibodies from 20 providers"/>
</dbReference>
<dbReference type="DNASU" id="84954"/>
<dbReference type="Ensembl" id="ENST00000262966.12">
    <molecule id="Q8N594-1"/>
    <property type="protein sequence ID" value="ENSP00000262966.7"/>
    <property type="gene ID" value="ENSG00000008382.16"/>
</dbReference>
<dbReference type="Ensembl" id="ENST00000359935.8">
    <molecule id="Q8N594-2"/>
    <property type="protein sequence ID" value="ENSP00000353015.3"/>
    <property type="gene ID" value="ENSG00000008382.16"/>
</dbReference>
<dbReference type="GeneID" id="84954"/>
<dbReference type="KEGG" id="hsa:84954"/>
<dbReference type="UCSC" id="uc002mae.3">
    <molecule id="Q8N594-1"/>
    <property type="organism name" value="human"/>
</dbReference>
<dbReference type="AGR" id="HGNC:25934"/>
<dbReference type="CTD" id="84954"/>
<dbReference type="DisGeNET" id="84954"/>
<dbReference type="GeneCards" id="MPND"/>
<dbReference type="HGNC" id="HGNC:25934">
    <property type="gene designation" value="MPND"/>
</dbReference>
<dbReference type="HPA" id="ENSG00000008382">
    <property type="expression patterns" value="Low tissue specificity"/>
</dbReference>
<dbReference type="neXtProt" id="NX_Q8N594"/>
<dbReference type="OpenTargets" id="ENSG00000008382"/>
<dbReference type="PharmGKB" id="PA162396091"/>
<dbReference type="VEuPathDB" id="HostDB:ENSG00000008382"/>
<dbReference type="eggNOG" id="KOG1555">
    <property type="taxonomic scope" value="Eukaryota"/>
</dbReference>
<dbReference type="GeneTree" id="ENSGT00940000160191"/>
<dbReference type="InParanoid" id="Q8N594"/>
<dbReference type="OrthoDB" id="167806at2759"/>
<dbReference type="PAN-GO" id="Q8N594">
    <property type="GO annotations" value="4 GO annotations based on evolutionary models"/>
</dbReference>
<dbReference type="PhylomeDB" id="Q8N594"/>
<dbReference type="TreeFam" id="TF324811"/>
<dbReference type="PathwayCommons" id="Q8N594"/>
<dbReference type="SignaLink" id="Q8N594"/>
<dbReference type="BioGRID-ORCS" id="84954">
    <property type="hits" value="17 hits in 1162 CRISPR screens"/>
</dbReference>
<dbReference type="ChiTaRS" id="MPND">
    <property type="organism name" value="human"/>
</dbReference>
<dbReference type="GenomeRNAi" id="84954"/>
<dbReference type="Pharos" id="Q8N594">
    <property type="development level" value="Tbio"/>
</dbReference>
<dbReference type="PRO" id="PR:Q8N594"/>
<dbReference type="Proteomes" id="UP000005640">
    <property type="component" value="Chromosome 19"/>
</dbReference>
<dbReference type="RNAct" id="Q8N594">
    <property type="molecule type" value="protein"/>
</dbReference>
<dbReference type="Bgee" id="ENSG00000008382">
    <property type="expression patterns" value="Expressed in mucosa of transverse colon and 127 other cell types or tissues"/>
</dbReference>
<dbReference type="ExpressionAtlas" id="Q8N594">
    <property type="expression patterns" value="baseline and differential"/>
</dbReference>
<dbReference type="GO" id="GO:0070531">
    <property type="term" value="C:BRCA1-A complex"/>
    <property type="evidence" value="ECO:0000318"/>
    <property type="project" value="GO_Central"/>
</dbReference>
<dbReference type="GO" id="GO:0070552">
    <property type="term" value="C:BRISC complex"/>
    <property type="evidence" value="ECO:0000318"/>
    <property type="project" value="GO_Central"/>
</dbReference>
<dbReference type="GO" id="GO:0046872">
    <property type="term" value="F:metal ion binding"/>
    <property type="evidence" value="ECO:0007669"/>
    <property type="project" value="UniProtKB-KW"/>
</dbReference>
<dbReference type="GO" id="GO:0140492">
    <property type="term" value="F:metal-dependent deubiquitinase activity"/>
    <property type="evidence" value="ECO:0007669"/>
    <property type="project" value="UniProtKB-ARBA"/>
</dbReference>
<dbReference type="GO" id="GO:0008237">
    <property type="term" value="F:metallopeptidase activity"/>
    <property type="evidence" value="ECO:0000318"/>
    <property type="project" value="GO_Central"/>
</dbReference>
<dbReference type="GO" id="GO:0031593">
    <property type="term" value="F:polyubiquitin modification-dependent protein binding"/>
    <property type="evidence" value="ECO:0000318"/>
    <property type="project" value="GO_Central"/>
</dbReference>
<dbReference type="GO" id="GO:0006302">
    <property type="term" value="P:double-strand break repair"/>
    <property type="evidence" value="ECO:0000318"/>
    <property type="project" value="GO_Central"/>
</dbReference>
<dbReference type="GO" id="GO:0006508">
    <property type="term" value="P:proteolysis"/>
    <property type="evidence" value="ECO:0007669"/>
    <property type="project" value="UniProtKB-KW"/>
</dbReference>
<dbReference type="CDD" id="cd08067">
    <property type="entry name" value="MPN_2A_DUB"/>
    <property type="match status" value="1"/>
</dbReference>
<dbReference type="FunFam" id="3.40.140.10:FF:000053">
    <property type="entry name" value="MPN domain-containing protein CG4751"/>
    <property type="match status" value="1"/>
</dbReference>
<dbReference type="Gene3D" id="3.40.140.10">
    <property type="entry name" value="Cytidine Deaminase, domain 2"/>
    <property type="match status" value="1"/>
</dbReference>
<dbReference type="InterPro" id="IPR000555">
    <property type="entry name" value="JAMM/MPN+_dom"/>
</dbReference>
<dbReference type="InterPro" id="IPR050242">
    <property type="entry name" value="JAMM_MPN+_peptidase_M67A"/>
</dbReference>
<dbReference type="InterPro" id="IPR037518">
    <property type="entry name" value="MPN"/>
</dbReference>
<dbReference type="InterPro" id="IPR040843">
    <property type="entry name" value="RAMA"/>
</dbReference>
<dbReference type="PANTHER" id="PTHR10410">
    <property type="entry name" value="EUKARYOTIC TRANSLATION INITIATION FACTOR 3 -RELATED"/>
    <property type="match status" value="1"/>
</dbReference>
<dbReference type="Pfam" id="PF01398">
    <property type="entry name" value="JAB"/>
    <property type="match status" value="1"/>
</dbReference>
<dbReference type="Pfam" id="PF18755">
    <property type="entry name" value="RAMA"/>
    <property type="match status" value="1"/>
</dbReference>
<dbReference type="SUPFAM" id="SSF102712">
    <property type="entry name" value="JAB1/MPN domain"/>
    <property type="match status" value="1"/>
</dbReference>
<dbReference type="PROSITE" id="PS50249">
    <property type="entry name" value="MPN"/>
    <property type="match status" value="1"/>
</dbReference>
<name>MPND_HUMAN</name>
<comment type="function">
    <text evidence="1 2 6">Probable protease (By similarity). Acts as a sensor of N(6)-methyladenosine methylation on DNA (m6A): recognizes and binds m6A DNA, leading to its degradation (PubMed:30982744). Binds only double strand DNA (dsDNA) in a sequence-independent manner (By similarity).</text>
</comment>
<comment type="subunit">
    <text evidence="1">Monomer. Mainly monomoric, but when binds to dsDNA, forms homotetramer assembled into two homodimers. May interact with histones; this interaction is facilitated by dsDNA binding.</text>
</comment>
<comment type="interaction">
    <interactant intactId="EBI-2512452">
        <id>Q8N594</id>
    </interactant>
    <interactant intactId="EBI-77613">
        <id>P05067</id>
        <label>APP</label>
    </interactant>
    <organismsDiffer>false</organismsDiffer>
    <experiments>3</experiments>
</comment>
<comment type="interaction">
    <interactant intactId="EBI-2512452">
        <id>Q8N594</id>
    </interactant>
    <interactant intactId="EBI-930964">
        <id>P54253</id>
        <label>ATXN1</label>
    </interactant>
    <organismsDiffer>false</organismsDiffer>
    <experiments>6</experiments>
</comment>
<comment type="interaction">
    <interactant intactId="EBI-2512452">
        <id>Q8N594</id>
    </interactant>
    <interactant intactId="EBI-25840379">
        <id>Q14203-5</id>
        <label>DCTN1</label>
    </interactant>
    <organismsDiffer>false</organismsDiffer>
    <experiments>3</experiments>
</comment>
<comment type="interaction">
    <interactant intactId="EBI-2512452">
        <id>Q8N594</id>
    </interactant>
    <interactant intactId="EBI-10976677">
        <id>G5E9A7</id>
        <label>DMWD</label>
    </interactant>
    <organismsDiffer>false</organismsDiffer>
    <experiments>3</experiments>
</comment>
<comment type="interaction">
    <interactant intactId="EBI-2512452">
        <id>Q8N594</id>
    </interactant>
    <interactant intactId="EBI-12690664">
        <id>P28358</id>
        <label>HOXD10</label>
    </interactant>
    <organismsDiffer>false</organismsDiffer>
    <experiments>3</experiments>
</comment>
<comment type="interaction">
    <interactant intactId="EBI-2512452">
        <id>Q8N594</id>
    </interactant>
    <interactant intactId="EBI-352682">
        <id>P04792</id>
        <label>HSPB1</label>
    </interactant>
    <organismsDiffer>false</organismsDiffer>
    <experiments>3</experiments>
</comment>
<comment type="interaction">
    <interactant intactId="EBI-2512452">
        <id>Q8N594</id>
    </interactant>
    <interactant intactId="EBI-517086">
        <id>O43464</id>
        <label>HTRA2</label>
    </interactant>
    <organismsDiffer>false</organismsDiffer>
    <experiments>3</experiments>
</comment>
<comment type="interaction">
    <interactant intactId="EBI-2512452">
        <id>Q8N594</id>
    </interactant>
    <interactant intactId="EBI-466029">
        <id>P42858</id>
        <label>HTT</label>
    </interactant>
    <organismsDiffer>false</organismsDiffer>
    <experiments>3</experiments>
</comment>
<comment type="interaction">
    <interactant intactId="EBI-2512452">
        <id>Q8N594</id>
    </interactant>
    <interactant intactId="EBI-1055254">
        <id>Q8WXH2</id>
        <label>JPH3</label>
    </interactant>
    <organismsDiffer>false</organismsDiffer>
    <experiments>3</experiments>
</comment>
<comment type="interaction">
    <interactant intactId="EBI-2512452">
        <id>Q8N594</id>
    </interactant>
    <interactant intactId="EBI-10975473">
        <id>O60333-2</id>
        <label>KIF1B</label>
    </interactant>
    <organismsDiffer>false</organismsDiffer>
    <experiments>3</experiments>
</comment>
<comment type="interaction">
    <interactant intactId="EBI-2512452">
        <id>Q8N594</id>
    </interactant>
    <interactant intactId="EBI-1014514">
        <id>P35240-4</id>
        <label>NF2</label>
    </interactant>
    <organismsDiffer>false</organismsDiffer>
    <experiments>3</experiments>
</comment>
<comment type="interaction">
    <interactant intactId="EBI-2512452">
        <id>Q8N594</id>
    </interactant>
    <interactant intactId="EBI-1391623">
        <id>P29474</id>
        <label>NOS3</label>
    </interactant>
    <organismsDiffer>false</organismsDiffer>
    <experiments>3</experiments>
</comment>
<comment type="interaction">
    <interactant intactId="EBI-2512452">
        <id>Q8N594</id>
    </interactant>
    <interactant intactId="EBI-21251460">
        <id>O60260-5</id>
        <label>PRKN</label>
    </interactant>
    <organismsDiffer>false</organismsDiffer>
    <experiments>3</experiments>
</comment>
<comment type="interaction">
    <interactant intactId="EBI-2512452">
        <id>Q8N594</id>
    </interactant>
    <interactant intactId="EBI-749195">
        <id>P60891</id>
        <label>PRPS1</label>
    </interactant>
    <organismsDiffer>false</organismsDiffer>
    <experiments>3</experiments>
</comment>
<comment type="interaction">
    <interactant intactId="EBI-2512452">
        <id>Q8N594</id>
    </interactant>
    <interactant intactId="EBI-396669">
        <id>Q9Y3C5</id>
        <label>RNF11</label>
    </interactant>
    <organismsDiffer>false</organismsDiffer>
    <experiments>3</experiments>
</comment>
<comment type="interaction">
    <interactant intactId="EBI-2512452">
        <id>Q8N594</id>
    </interactant>
    <interactant intactId="EBI-985879">
        <id>P37840</id>
        <label>SNCA</label>
    </interactant>
    <organismsDiffer>false</organismsDiffer>
    <experiments>3</experiments>
</comment>
<comment type="interaction">
    <interactant intactId="EBI-2512452">
        <id>Q8N594</id>
    </interactant>
    <interactant intactId="EBI-990792">
        <id>P00441</id>
        <label>SOD1</label>
    </interactant>
    <organismsDiffer>false</organismsDiffer>
    <experiments>3</experiments>
</comment>
<comment type="interaction">
    <interactant intactId="EBI-2512452">
        <id>Q8N594</id>
    </interactant>
    <interactant intactId="EBI-5235340">
        <id>Q7Z699</id>
        <label>SPRED1</label>
    </interactant>
    <organismsDiffer>false</organismsDiffer>
    <experiments>3</experiments>
</comment>
<comment type="interaction">
    <interactant intactId="EBI-2512452">
        <id>Q8N594</id>
    </interactant>
    <interactant intactId="EBI-372899">
        <id>Q13148</id>
        <label>TARDBP</label>
    </interactant>
    <organismsDiffer>false</organismsDiffer>
    <experiments>6</experiments>
</comment>
<comment type="interaction">
    <interactant intactId="EBI-2512452">
        <id>Q8N594</id>
    </interactant>
    <interactant intactId="EBI-720609">
        <id>O76024</id>
        <label>WFS1</label>
    </interactant>
    <organismsDiffer>false</organismsDiffer>
    <experiments>3</experiments>
</comment>
<comment type="alternative products">
    <event type="alternative splicing"/>
    <isoform>
        <id>Q8N594-1</id>
        <name>1</name>
        <sequence type="displayed"/>
    </isoform>
    <isoform>
        <id>Q8N594-2</id>
        <name>2</name>
        <sequence type="described" ref="VSP_023400 VSP_023401"/>
    </isoform>
</comment>
<comment type="domain">
    <text evidence="1 10">The RAMA domain recognizes and binds N(6)-methyladenosine methylation on DNA (m6A) (Probable). The RAMA domain mediates interaction with histones (By similarity).</text>
</comment>
<comment type="domain">
    <text evidence="1">The two acidic regions inhibit DNA binding. The two acidic regions promotes histone interaction.</text>
</comment>
<comment type="PTM">
    <text evidence="6">Degraded following binding to N(6)-methyladenosine methylated DNA (m6A).</text>
</comment>
<comment type="similarity">
    <text evidence="9">Belongs to the peptidase M67 family.</text>
</comment>
<protein>
    <recommendedName>
        <fullName evidence="9">MPN domain-containing protein</fullName>
        <ecNumber evidence="2">3.4.-.-</ecNumber>
    </recommendedName>
</protein>
<accession>Q8N594</accession>
<accession>Q96SJ0</accession>
<accession>Q9Y2P1</accession>
<accession>Q9Y2P2</accession>
<gene>
    <name evidence="8 11" type="primary">MPND</name>
</gene>
<keyword id="KW-0007">Acetylation</keyword>
<keyword id="KW-0025">Alternative splicing</keyword>
<keyword id="KW-0378">Hydrolase</keyword>
<keyword id="KW-0479">Metal-binding</keyword>
<keyword id="KW-0482">Metalloprotease</keyword>
<keyword id="KW-0597">Phosphoprotein</keyword>
<keyword id="KW-0645">Protease</keyword>
<keyword id="KW-1267">Proteomics identification</keyword>
<keyword id="KW-1185">Reference proteome</keyword>
<keyword id="KW-0862">Zinc</keyword>
<reference key="1">
    <citation type="journal article" date="2004" name="Nat. Genet.">
        <title>Complete sequencing and characterization of 21,243 full-length human cDNAs.</title>
        <authorList>
            <person name="Ota T."/>
            <person name="Suzuki Y."/>
            <person name="Nishikawa T."/>
            <person name="Otsuki T."/>
            <person name="Sugiyama T."/>
            <person name="Irie R."/>
            <person name="Wakamatsu A."/>
            <person name="Hayashi K."/>
            <person name="Sato H."/>
            <person name="Nagai K."/>
            <person name="Kimura K."/>
            <person name="Makita H."/>
            <person name="Sekine M."/>
            <person name="Obayashi M."/>
            <person name="Nishi T."/>
            <person name="Shibahara T."/>
            <person name="Tanaka T."/>
            <person name="Ishii S."/>
            <person name="Yamamoto J."/>
            <person name="Saito K."/>
            <person name="Kawai Y."/>
            <person name="Isono Y."/>
            <person name="Nakamura Y."/>
            <person name="Nagahari K."/>
            <person name="Murakami K."/>
            <person name="Yasuda T."/>
            <person name="Iwayanagi T."/>
            <person name="Wagatsuma M."/>
            <person name="Shiratori A."/>
            <person name="Sudo H."/>
            <person name="Hosoiri T."/>
            <person name="Kaku Y."/>
            <person name="Kodaira H."/>
            <person name="Kondo H."/>
            <person name="Sugawara M."/>
            <person name="Takahashi M."/>
            <person name="Kanda K."/>
            <person name="Yokoi T."/>
            <person name="Furuya T."/>
            <person name="Kikkawa E."/>
            <person name="Omura Y."/>
            <person name="Abe K."/>
            <person name="Kamihara K."/>
            <person name="Katsuta N."/>
            <person name="Sato K."/>
            <person name="Tanikawa M."/>
            <person name="Yamazaki M."/>
            <person name="Ninomiya K."/>
            <person name="Ishibashi T."/>
            <person name="Yamashita H."/>
            <person name="Murakawa K."/>
            <person name="Fujimori K."/>
            <person name="Tanai H."/>
            <person name="Kimata M."/>
            <person name="Watanabe M."/>
            <person name="Hiraoka S."/>
            <person name="Chiba Y."/>
            <person name="Ishida S."/>
            <person name="Ono Y."/>
            <person name="Takiguchi S."/>
            <person name="Watanabe S."/>
            <person name="Yosida M."/>
            <person name="Hotuta T."/>
            <person name="Kusano J."/>
            <person name="Kanehori K."/>
            <person name="Takahashi-Fujii A."/>
            <person name="Hara H."/>
            <person name="Tanase T.-O."/>
            <person name="Nomura Y."/>
            <person name="Togiya S."/>
            <person name="Komai F."/>
            <person name="Hara R."/>
            <person name="Takeuchi K."/>
            <person name="Arita M."/>
            <person name="Imose N."/>
            <person name="Musashino K."/>
            <person name="Yuuki H."/>
            <person name="Oshima A."/>
            <person name="Sasaki N."/>
            <person name="Aotsuka S."/>
            <person name="Yoshikawa Y."/>
            <person name="Matsunawa H."/>
            <person name="Ichihara T."/>
            <person name="Shiohata N."/>
            <person name="Sano S."/>
            <person name="Moriya S."/>
            <person name="Momiyama H."/>
            <person name="Satoh N."/>
            <person name="Takami S."/>
            <person name="Terashima Y."/>
            <person name="Suzuki O."/>
            <person name="Nakagawa S."/>
            <person name="Senoh A."/>
            <person name="Mizoguchi H."/>
            <person name="Goto Y."/>
            <person name="Shimizu F."/>
            <person name="Wakebe H."/>
            <person name="Hishigaki H."/>
            <person name="Watanabe T."/>
            <person name="Sugiyama A."/>
            <person name="Takemoto M."/>
            <person name="Kawakami B."/>
            <person name="Yamazaki M."/>
            <person name="Watanabe K."/>
            <person name="Kumagai A."/>
            <person name="Itakura S."/>
            <person name="Fukuzumi Y."/>
            <person name="Fujimori Y."/>
            <person name="Komiyama M."/>
            <person name="Tashiro H."/>
            <person name="Tanigami A."/>
            <person name="Fujiwara T."/>
            <person name="Ono T."/>
            <person name="Yamada K."/>
            <person name="Fujii Y."/>
            <person name="Ozaki K."/>
            <person name="Hirao M."/>
            <person name="Ohmori Y."/>
            <person name="Kawabata A."/>
            <person name="Hikiji T."/>
            <person name="Kobatake N."/>
            <person name="Inagaki H."/>
            <person name="Ikema Y."/>
            <person name="Okamoto S."/>
            <person name="Okitani R."/>
            <person name="Kawakami T."/>
            <person name="Noguchi S."/>
            <person name="Itoh T."/>
            <person name="Shigeta K."/>
            <person name="Senba T."/>
            <person name="Matsumura K."/>
            <person name="Nakajima Y."/>
            <person name="Mizuno T."/>
            <person name="Morinaga M."/>
            <person name="Sasaki M."/>
            <person name="Togashi T."/>
            <person name="Oyama M."/>
            <person name="Hata H."/>
            <person name="Watanabe M."/>
            <person name="Komatsu T."/>
            <person name="Mizushima-Sugano J."/>
            <person name="Satoh T."/>
            <person name="Shirai Y."/>
            <person name="Takahashi Y."/>
            <person name="Nakagawa K."/>
            <person name="Okumura K."/>
            <person name="Nagase T."/>
            <person name="Nomura N."/>
            <person name="Kikuchi H."/>
            <person name="Masuho Y."/>
            <person name="Yamashita R."/>
            <person name="Nakai K."/>
            <person name="Yada T."/>
            <person name="Nakamura Y."/>
            <person name="Ohara O."/>
            <person name="Isogai T."/>
            <person name="Sugano S."/>
        </authorList>
    </citation>
    <scope>NUCLEOTIDE SEQUENCE [LARGE SCALE MRNA] (ISOFORM 2)</scope>
</reference>
<reference key="2">
    <citation type="journal article" date="2004" name="Nature">
        <title>The DNA sequence and biology of human chromosome 19.</title>
        <authorList>
            <person name="Grimwood J."/>
            <person name="Gordon L.A."/>
            <person name="Olsen A.S."/>
            <person name="Terry A."/>
            <person name="Schmutz J."/>
            <person name="Lamerdin J.E."/>
            <person name="Hellsten U."/>
            <person name="Goodstein D."/>
            <person name="Couronne O."/>
            <person name="Tran-Gyamfi M."/>
            <person name="Aerts A."/>
            <person name="Altherr M."/>
            <person name="Ashworth L."/>
            <person name="Bajorek E."/>
            <person name="Black S."/>
            <person name="Branscomb E."/>
            <person name="Caenepeel S."/>
            <person name="Carrano A.V."/>
            <person name="Caoile C."/>
            <person name="Chan Y.M."/>
            <person name="Christensen M."/>
            <person name="Cleland C.A."/>
            <person name="Copeland A."/>
            <person name="Dalin E."/>
            <person name="Dehal P."/>
            <person name="Denys M."/>
            <person name="Detter J.C."/>
            <person name="Escobar J."/>
            <person name="Flowers D."/>
            <person name="Fotopulos D."/>
            <person name="Garcia C."/>
            <person name="Georgescu A.M."/>
            <person name="Glavina T."/>
            <person name="Gomez M."/>
            <person name="Gonzales E."/>
            <person name="Groza M."/>
            <person name="Hammon N."/>
            <person name="Hawkins T."/>
            <person name="Haydu L."/>
            <person name="Ho I."/>
            <person name="Huang W."/>
            <person name="Israni S."/>
            <person name="Jett J."/>
            <person name="Kadner K."/>
            <person name="Kimball H."/>
            <person name="Kobayashi A."/>
            <person name="Larionov V."/>
            <person name="Leem S.-H."/>
            <person name="Lopez F."/>
            <person name="Lou Y."/>
            <person name="Lowry S."/>
            <person name="Malfatti S."/>
            <person name="Martinez D."/>
            <person name="McCready P.M."/>
            <person name="Medina C."/>
            <person name="Morgan J."/>
            <person name="Nelson K."/>
            <person name="Nolan M."/>
            <person name="Ovcharenko I."/>
            <person name="Pitluck S."/>
            <person name="Pollard M."/>
            <person name="Popkie A.P."/>
            <person name="Predki P."/>
            <person name="Quan G."/>
            <person name="Ramirez L."/>
            <person name="Rash S."/>
            <person name="Retterer J."/>
            <person name="Rodriguez A."/>
            <person name="Rogers S."/>
            <person name="Salamov A."/>
            <person name="Salazar A."/>
            <person name="She X."/>
            <person name="Smith D."/>
            <person name="Slezak T."/>
            <person name="Solovyev V."/>
            <person name="Thayer N."/>
            <person name="Tice H."/>
            <person name="Tsai M."/>
            <person name="Ustaszewska A."/>
            <person name="Vo N."/>
            <person name="Wagner M."/>
            <person name="Wheeler J."/>
            <person name="Wu K."/>
            <person name="Xie G."/>
            <person name="Yang J."/>
            <person name="Dubchak I."/>
            <person name="Furey T.S."/>
            <person name="DeJong P."/>
            <person name="Dickson M."/>
            <person name="Gordon D."/>
            <person name="Eichler E.E."/>
            <person name="Pennacchio L.A."/>
            <person name="Richardson P."/>
            <person name="Stubbs L."/>
            <person name="Rokhsar D.S."/>
            <person name="Myers R.M."/>
            <person name="Rubin E.M."/>
            <person name="Lucas S.M."/>
        </authorList>
    </citation>
    <scope>NUCLEOTIDE SEQUENCE [LARGE SCALE GENOMIC DNA]</scope>
</reference>
<reference key="3">
    <citation type="journal article" date="2004" name="Genome Res.">
        <title>The status, quality, and expansion of the NIH full-length cDNA project: the Mammalian Gene Collection (MGC).</title>
        <authorList>
            <consortium name="The MGC Project Team"/>
        </authorList>
    </citation>
    <scope>NUCLEOTIDE SEQUENCE [LARGE SCALE MRNA] (ISOFORM 1)</scope>
    <source>
        <tissue>Eye</tissue>
    </source>
</reference>
<reference key="4">
    <citation type="journal article" date="2006" name="Cell">
        <title>Global, in vivo, and site-specific phosphorylation dynamics in signaling networks.</title>
        <authorList>
            <person name="Olsen J.V."/>
            <person name="Blagoev B."/>
            <person name="Gnad F."/>
            <person name="Macek B."/>
            <person name="Kumar C."/>
            <person name="Mortensen P."/>
            <person name="Mann M."/>
        </authorList>
    </citation>
    <scope>PHOSPHORYLATION [LARGE SCALE ANALYSIS] AT SER-178 AND SER-181</scope>
    <scope>IDENTIFICATION BY MASS SPECTROMETRY [LARGE SCALE ANALYSIS]</scope>
    <source>
        <tissue>Cervix carcinoma</tissue>
    </source>
</reference>
<reference key="5">
    <citation type="journal article" date="2011" name="Sci. Signal.">
        <title>System-wide temporal characterization of the proteome and phosphoproteome of human embryonic stem cell differentiation.</title>
        <authorList>
            <person name="Rigbolt K.T."/>
            <person name="Prokhorova T.A."/>
            <person name="Akimov V."/>
            <person name="Henningsen J."/>
            <person name="Johansen P.T."/>
            <person name="Kratchmarova I."/>
            <person name="Kassem M."/>
            <person name="Mann M."/>
            <person name="Olsen J.V."/>
            <person name="Blagoev B."/>
        </authorList>
    </citation>
    <scope>ACETYLATION [LARGE SCALE ANALYSIS] AT ALA-2</scope>
    <scope>PHOSPHORYLATION [LARGE SCALE ANALYSIS] AT SER-8</scope>
    <scope>CLEAVAGE OF INITIATOR METHIONINE [LARGE SCALE ANALYSIS]</scope>
    <scope>IDENTIFICATION BY MASS SPECTROMETRY [LARGE SCALE ANALYSIS]</scope>
</reference>
<reference key="6">
    <citation type="journal article" date="2014" name="J. Proteomics">
        <title>An enzyme assisted RP-RPLC approach for in-depth analysis of human liver phosphoproteome.</title>
        <authorList>
            <person name="Bian Y."/>
            <person name="Song C."/>
            <person name="Cheng K."/>
            <person name="Dong M."/>
            <person name="Wang F."/>
            <person name="Huang J."/>
            <person name="Sun D."/>
            <person name="Wang L."/>
            <person name="Ye M."/>
            <person name="Zou H."/>
        </authorList>
    </citation>
    <scope>IDENTIFICATION BY MASS SPECTROMETRY [LARGE SCALE ANALYSIS]</scope>
    <source>
        <tissue>Liver</tissue>
    </source>
</reference>
<reference key="7">
    <citation type="journal article" date="2019" name="Mol. Cell">
        <title>An adversarial DNA N6-methyladenine-sensor network preserves Polycomb silencing.</title>
        <authorList>
            <person name="Kweon S.M."/>
            <person name="Chen Y."/>
            <person name="Moon E."/>
            <person name="Kvederaviciute K."/>
            <person name="Klimasauskas S."/>
            <person name="Feldman D.E."/>
        </authorList>
    </citation>
    <scope>FUNCTION</scope>
    <scope>DOMAIN</scope>
    <scope>PROTEOLYTIC CLEAVAGE</scope>
</reference>
<feature type="initiator methionine" description="Removed" evidence="13">
    <location>
        <position position="1"/>
    </location>
</feature>
<feature type="chain" id="PRO_0000278804" description="MPN domain-containing protein">
    <location>
        <begin position="2"/>
        <end position="471"/>
    </location>
</feature>
<feature type="domain" description="RAMA" evidence="3">
    <location>
        <begin position="71"/>
        <end position="166"/>
    </location>
</feature>
<feature type="domain" description="MPN" evidence="4">
    <location>
        <begin position="272"/>
        <end position="407"/>
    </location>
</feature>
<feature type="region of interest" description="Disordered" evidence="5">
    <location>
        <begin position="1"/>
        <end position="63"/>
    </location>
</feature>
<feature type="region of interest" description="Disordered" evidence="5">
    <location>
        <begin position="170"/>
        <end position="229"/>
    </location>
</feature>
<feature type="short sequence motif" description="JAMM motif" evidence="4">
    <location>
        <begin position="349"/>
        <end position="362"/>
    </location>
</feature>
<feature type="compositionally biased region" description="Low complexity" evidence="5">
    <location>
        <begin position="1"/>
        <end position="10"/>
    </location>
</feature>
<feature type="compositionally biased region" description="Acidic residues" evidence="5">
    <location>
        <begin position="16"/>
        <end position="29"/>
    </location>
</feature>
<feature type="compositionally biased region" description="Gly residues" evidence="5">
    <location>
        <begin position="36"/>
        <end position="63"/>
    </location>
</feature>
<feature type="compositionally biased region" description="Acidic residues" evidence="5">
    <location>
        <begin position="182"/>
        <end position="197"/>
    </location>
</feature>
<feature type="binding site" evidence="1">
    <location>
        <position position="123"/>
    </location>
    <ligand>
        <name>DNA</name>
        <dbReference type="ChEBI" id="CHEBI:16991"/>
        <note>ligand shared between one subunit of each homodimer constituting the homotetramer</note>
    </ligand>
</feature>
<feature type="binding site" evidence="1">
    <location>
        <position position="125"/>
    </location>
    <ligand>
        <name>DNA</name>
        <dbReference type="ChEBI" id="CHEBI:16991"/>
        <note>ligand shared between one subunit of each homodimer constituting the homotetramer</note>
    </ligand>
</feature>
<feature type="binding site" evidence="1">
    <location>
        <position position="145"/>
    </location>
    <ligand>
        <name>DNA</name>
        <dbReference type="ChEBI" id="CHEBI:16991"/>
        <note>ligand shared between one subunit of each homodimer constituting the homotetramer</note>
    </ligand>
</feature>
<feature type="binding site" evidence="4">
    <location>
        <position position="349"/>
    </location>
    <ligand>
        <name>Zn(2+)</name>
        <dbReference type="ChEBI" id="CHEBI:29105"/>
        <note>catalytic</note>
    </ligand>
</feature>
<feature type="binding site" evidence="4">
    <location>
        <position position="351"/>
    </location>
    <ligand>
        <name>Zn(2+)</name>
        <dbReference type="ChEBI" id="CHEBI:29105"/>
        <note>catalytic</note>
    </ligand>
</feature>
<feature type="binding site" evidence="4">
    <location>
        <position position="362"/>
    </location>
    <ligand>
        <name>Zn(2+)</name>
        <dbReference type="ChEBI" id="CHEBI:29105"/>
        <note>catalytic</note>
    </ligand>
</feature>
<feature type="modified residue" description="N-acetylalanine" evidence="13">
    <location>
        <position position="2"/>
    </location>
</feature>
<feature type="modified residue" description="Phosphoserine" evidence="13">
    <location>
        <position position="8"/>
    </location>
</feature>
<feature type="modified residue" description="Phosphoserine" evidence="12">
    <location>
        <position position="178"/>
    </location>
</feature>
<feature type="modified residue" description="Phosphoserine" evidence="12">
    <location>
        <position position="181"/>
    </location>
</feature>
<feature type="splice variant" id="VSP_023400" description="In isoform 2." evidence="7">
    <location>
        <begin position="283"/>
        <end position="332"/>
    </location>
</feature>
<feature type="splice variant" id="VSP_023401" description="In isoform 2." evidence="7">
    <original>E</original>
    <variation>EQRPSDYGIPMDVEMAYVQDSFLTNDILHEM</variation>
    <location>
        <position position="412"/>
    </location>
</feature>
<feature type="sequence conflict" description="In Ref. 1; BAB55432." evidence="9" ref="1">
    <original>E</original>
    <variation>K</variation>
    <location>
        <position position="193"/>
    </location>
</feature>
<proteinExistence type="evidence at protein level"/>
<evidence type="ECO:0000250" key="1">
    <source>
        <dbReference type="UniProtKB" id="Q3TV65"/>
    </source>
</evidence>
<evidence type="ECO:0000250" key="2">
    <source>
        <dbReference type="UniProtKB" id="Q5VVJ2"/>
    </source>
</evidence>
<evidence type="ECO:0000255" key="3"/>
<evidence type="ECO:0000255" key="4">
    <source>
        <dbReference type="PROSITE-ProRule" id="PRU01182"/>
    </source>
</evidence>
<evidence type="ECO:0000256" key="5">
    <source>
        <dbReference type="SAM" id="MobiDB-lite"/>
    </source>
</evidence>
<evidence type="ECO:0000269" key="6">
    <source>
    </source>
</evidence>
<evidence type="ECO:0000303" key="7">
    <source>
    </source>
</evidence>
<evidence type="ECO:0000303" key="8">
    <source>
    </source>
</evidence>
<evidence type="ECO:0000305" key="9"/>
<evidence type="ECO:0000305" key="10">
    <source>
    </source>
</evidence>
<evidence type="ECO:0000312" key="11">
    <source>
        <dbReference type="HGNC" id="HGNC:25934"/>
    </source>
</evidence>
<evidence type="ECO:0007744" key="12">
    <source>
    </source>
</evidence>
<evidence type="ECO:0007744" key="13">
    <source>
    </source>
</evidence>
<sequence>MAAPEPLSPAGGAGEEAPEEDEDEAEAEDPERPNAGAGGGRSGGGGSSVSGGGGGGGAGAGGCGGPGGALTRRAVTLRVLLKDALLEPGAGVLSIYYLGKKFLGDLQPDGRIMWQETGQTFNSPSAWATHCKKLVNPAKKSGCGWASVKYKGQKLDKYKATWLRLHQLHTPATAADESPASEGEEEELLMEEEEEDVLAGVSAEDKSRRPLGKSPSEPAHPEATTPGKRVDSKIRVPVRYCMLGSRDLARNPHTLVEVTSFAAINKFQPFNVAVSSNVLFLLDFHSHLTRSEVVGYLGGRWDVNSQMLTVLRAFPCRSRLGDAETAAAIEEEIYQSLFLRGLSLVGWYHSHPHSPALPSLQDIDAQMDYQLRLQGSSNGFQPCLALLCSPYYSGNPGPESKISPFWVMPPPEMLLVEFYKGSPDLVRLQEPWSQEHTYLDKLKISLASRTPKDQSLCHVLEQVCGVLKQGS</sequence>